<dbReference type="EC" id="2.7.1.50" evidence="1"/>
<dbReference type="EMBL" id="AE009950">
    <property type="protein sequence ID" value="AAL81459.1"/>
    <property type="molecule type" value="Genomic_DNA"/>
</dbReference>
<dbReference type="RefSeq" id="WP_011012481.1">
    <property type="nucleotide sequence ID" value="NZ_CP023154.1"/>
</dbReference>
<dbReference type="SMR" id="Q8U191"/>
<dbReference type="STRING" id="186497.PF1335"/>
<dbReference type="PaxDb" id="186497-PF1335"/>
<dbReference type="GeneID" id="41713138"/>
<dbReference type="KEGG" id="pfu:PF1335"/>
<dbReference type="PATRIC" id="fig|186497.12.peg.1398"/>
<dbReference type="eggNOG" id="arCOG00019">
    <property type="taxonomic scope" value="Archaea"/>
</dbReference>
<dbReference type="HOGENOM" id="CLU_019943_0_0_2"/>
<dbReference type="OrthoDB" id="214286at2157"/>
<dbReference type="PhylomeDB" id="Q8U191"/>
<dbReference type="UniPathway" id="UPA00060">
    <property type="reaction ID" value="UER00139"/>
</dbReference>
<dbReference type="Proteomes" id="UP000001013">
    <property type="component" value="Chromosome"/>
</dbReference>
<dbReference type="GO" id="GO:0005524">
    <property type="term" value="F:ATP binding"/>
    <property type="evidence" value="ECO:0007669"/>
    <property type="project" value="UniProtKB-UniRule"/>
</dbReference>
<dbReference type="GO" id="GO:0004417">
    <property type="term" value="F:hydroxyethylthiazole kinase activity"/>
    <property type="evidence" value="ECO:0007669"/>
    <property type="project" value="UniProtKB-UniRule"/>
</dbReference>
<dbReference type="GO" id="GO:0000287">
    <property type="term" value="F:magnesium ion binding"/>
    <property type="evidence" value="ECO:0007669"/>
    <property type="project" value="UniProtKB-UniRule"/>
</dbReference>
<dbReference type="GO" id="GO:0009228">
    <property type="term" value="P:thiamine biosynthetic process"/>
    <property type="evidence" value="ECO:0007669"/>
    <property type="project" value="UniProtKB-KW"/>
</dbReference>
<dbReference type="GO" id="GO:0009229">
    <property type="term" value="P:thiamine diphosphate biosynthetic process"/>
    <property type="evidence" value="ECO:0007669"/>
    <property type="project" value="UniProtKB-UniRule"/>
</dbReference>
<dbReference type="CDD" id="cd01170">
    <property type="entry name" value="THZ_kinase"/>
    <property type="match status" value="1"/>
</dbReference>
<dbReference type="Gene3D" id="3.40.1190.20">
    <property type="match status" value="1"/>
</dbReference>
<dbReference type="HAMAP" id="MF_00228">
    <property type="entry name" value="Thz_kinase"/>
    <property type="match status" value="1"/>
</dbReference>
<dbReference type="InterPro" id="IPR000417">
    <property type="entry name" value="Hyethyz_kinase"/>
</dbReference>
<dbReference type="InterPro" id="IPR029056">
    <property type="entry name" value="Ribokinase-like"/>
</dbReference>
<dbReference type="NCBIfam" id="NF006830">
    <property type="entry name" value="PRK09355.1"/>
    <property type="match status" value="1"/>
</dbReference>
<dbReference type="NCBIfam" id="TIGR00694">
    <property type="entry name" value="thiM"/>
    <property type="match status" value="1"/>
</dbReference>
<dbReference type="Pfam" id="PF02110">
    <property type="entry name" value="HK"/>
    <property type="match status" value="1"/>
</dbReference>
<dbReference type="PIRSF" id="PIRSF000513">
    <property type="entry name" value="Thz_kinase"/>
    <property type="match status" value="1"/>
</dbReference>
<dbReference type="PRINTS" id="PR01099">
    <property type="entry name" value="HYETHTZKNASE"/>
</dbReference>
<dbReference type="SUPFAM" id="SSF53613">
    <property type="entry name" value="Ribokinase-like"/>
    <property type="match status" value="1"/>
</dbReference>
<proteinExistence type="inferred from homology"/>
<reference key="1">
    <citation type="journal article" date="1999" name="Genetics">
        <title>Divergence of the hyperthermophilic archaea Pyrococcus furiosus and P. horikoshii inferred from complete genomic sequences.</title>
        <authorList>
            <person name="Maeder D.L."/>
            <person name="Weiss R.B."/>
            <person name="Dunn D.M."/>
            <person name="Cherry J.L."/>
            <person name="Gonzalez J.M."/>
            <person name="DiRuggiero J."/>
            <person name="Robb F.T."/>
        </authorList>
    </citation>
    <scope>NUCLEOTIDE SEQUENCE [LARGE SCALE GENOMIC DNA]</scope>
    <source>
        <strain>ATCC 43587 / DSM 3638 / JCM 8422 / Vc1</strain>
    </source>
</reference>
<protein>
    <recommendedName>
        <fullName evidence="1">Hydroxyethylthiazole kinase</fullName>
        <ecNumber evidence="1">2.7.1.50</ecNumber>
    </recommendedName>
    <alternativeName>
        <fullName evidence="1">4-methyl-5-beta-hydroxyethylthiazole kinase</fullName>
        <shortName evidence="1">TH kinase</shortName>
        <shortName evidence="1">Thz kinase</shortName>
    </alternativeName>
</protein>
<gene>
    <name evidence="1" type="primary">thiM</name>
    <name type="ordered locus">PF1335</name>
</gene>
<keyword id="KW-0067">ATP-binding</keyword>
<keyword id="KW-0418">Kinase</keyword>
<keyword id="KW-0460">Magnesium</keyword>
<keyword id="KW-0479">Metal-binding</keyword>
<keyword id="KW-0547">Nucleotide-binding</keyword>
<keyword id="KW-1185">Reference proteome</keyword>
<keyword id="KW-0784">Thiamine biosynthesis</keyword>
<keyword id="KW-0808">Transferase</keyword>
<accession>Q8U191</accession>
<organism>
    <name type="scientific">Pyrococcus furiosus (strain ATCC 43587 / DSM 3638 / JCM 8422 / Vc1)</name>
    <dbReference type="NCBI Taxonomy" id="186497"/>
    <lineage>
        <taxon>Archaea</taxon>
        <taxon>Methanobacteriati</taxon>
        <taxon>Methanobacteriota</taxon>
        <taxon>Thermococci</taxon>
        <taxon>Thermococcales</taxon>
        <taxon>Thermococcaceae</taxon>
        <taxon>Pyrococcus</taxon>
    </lineage>
</organism>
<name>THIM_PYRFU</name>
<comment type="function">
    <text evidence="1">Catalyzes the phosphorylation of the hydroxyl group of 4-methyl-5-beta-hydroxyethylthiazole (THZ).</text>
</comment>
<comment type="catalytic activity">
    <reaction evidence="1">
        <text>5-(2-hydroxyethyl)-4-methylthiazole + ATP = 4-methyl-5-(2-phosphooxyethyl)-thiazole + ADP + H(+)</text>
        <dbReference type="Rhea" id="RHEA:24212"/>
        <dbReference type="ChEBI" id="CHEBI:15378"/>
        <dbReference type="ChEBI" id="CHEBI:17957"/>
        <dbReference type="ChEBI" id="CHEBI:30616"/>
        <dbReference type="ChEBI" id="CHEBI:58296"/>
        <dbReference type="ChEBI" id="CHEBI:456216"/>
        <dbReference type="EC" id="2.7.1.50"/>
    </reaction>
</comment>
<comment type="cofactor">
    <cofactor evidence="1">
        <name>Mg(2+)</name>
        <dbReference type="ChEBI" id="CHEBI:18420"/>
    </cofactor>
</comment>
<comment type="pathway">
    <text evidence="1">Cofactor biosynthesis; thiamine diphosphate biosynthesis; 4-methyl-5-(2-phosphoethyl)-thiazole from 5-(2-hydroxyethyl)-4-methylthiazole: step 1/1.</text>
</comment>
<comment type="similarity">
    <text evidence="1">Belongs to the Thz kinase family.</text>
</comment>
<evidence type="ECO:0000255" key="1">
    <source>
        <dbReference type="HAMAP-Rule" id="MF_00228"/>
    </source>
</evidence>
<sequence length="265" mass="28327">MISVGEALAKVRERKPLVHNITNFVVMNTTANALLALGASPVMAHAEEELEEMVRIADSVVVNIGTLDKFWINSMIKAAKLAKEYGKPLVLDPVGAGATRLRTKTALEVLKIGATIVKGNFGEISALLGEEGKTRGVDSSTYDPERAKELALAVAEEFSTIVAVTGKVDYVSDGKRVYAVYNGHELLGRVTGTGCIVAALTGAFVAVNDPLTSAVSSLVVFEVAAEKAAEEAKAPGTFHAKLYDWLYLLTPEDVERLKKIEVVKV</sequence>
<feature type="chain" id="PRO_0000156971" description="Hydroxyethylthiazole kinase">
    <location>
        <begin position="1"/>
        <end position="265"/>
    </location>
</feature>
<feature type="binding site" evidence="1">
    <location>
        <position position="43"/>
    </location>
    <ligand>
        <name>substrate</name>
    </ligand>
</feature>
<feature type="binding site" evidence="1">
    <location>
        <position position="118"/>
    </location>
    <ligand>
        <name>ATP</name>
        <dbReference type="ChEBI" id="CHEBI:30616"/>
    </ligand>
</feature>
<feature type="binding site" evidence="1">
    <location>
        <position position="165"/>
    </location>
    <ligand>
        <name>ATP</name>
        <dbReference type="ChEBI" id="CHEBI:30616"/>
    </ligand>
</feature>
<feature type="binding site" evidence="1">
    <location>
        <position position="192"/>
    </location>
    <ligand>
        <name>substrate</name>
    </ligand>
</feature>